<evidence type="ECO:0000255" key="1"/>
<evidence type="ECO:0000269" key="2">
    <source>
    </source>
</evidence>
<evidence type="ECO:0000269" key="3">
    <source>
    </source>
</evidence>
<evidence type="ECO:0000269" key="4">
    <source>
    </source>
</evidence>
<evidence type="ECO:0000305" key="5"/>
<evidence type="ECO:0007744" key="6">
    <source>
    </source>
</evidence>
<organism>
    <name type="scientific">Saccharomyces cerevisiae (strain ATCC 204508 / S288c)</name>
    <name type="common">Baker's yeast</name>
    <dbReference type="NCBI Taxonomy" id="559292"/>
    <lineage>
        <taxon>Eukaryota</taxon>
        <taxon>Fungi</taxon>
        <taxon>Dikarya</taxon>
        <taxon>Ascomycota</taxon>
        <taxon>Saccharomycotina</taxon>
        <taxon>Saccharomycetes</taxon>
        <taxon>Saccharomycetales</taxon>
        <taxon>Saccharomycetaceae</taxon>
        <taxon>Saccharomyces</taxon>
    </lineage>
</organism>
<dbReference type="EMBL" id="X76139">
    <property type="protein sequence ID" value="CAA53742.1"/>
    <property type="molecule type" value="Genomic_DNA"/>
</dbReference>
<dbReference type="EMBL" id="X75319">
    <property type="protein sequence ID" value="CAA53068.1"/>
    <property type="molecule type" value="mRNA"/>
</dbReference>
<dbReference type="EMBL" id="Z72867">
    <property type="protein sequence ID" value="CAA97084.1"/>
    <property type="molecule type" value="Genomic_DNA"/>
</dbReference>
<dbReference type="EMBL" id="AY557775">
    <property type="protein sequence ID" value="AAS56101.1"/>
    <property type="molecule type" value="Genomic_DNA"/>
</dbReference>
<dbReference type="EMBL" id="BK006941">
    <property type="protein sequence ID" value="DAA08175.1"/>
    <property type="molecule type" value="Genomic_DNA"/>
</dbReference>
<dbReference type="PIR" id="S39568">
    <property type="entry name" value="S39568"/>
</dbReference>
<dbReference type="RefSeq" id="NP_011596.1">
    <property type="nucleotide sequence ID" value="NM_001181211.1"/>
</dbReference>
<dbReference type="SMR" id="P35180"/>
<dbReference type="BioGRID" id="33324">
    <property type="interactions" value="119"/>
</dbReference>
<dbReference type="ComplexPortal" id="CPX-474">
    <property type="entry name" value="TOM40 mitochondrial outer membrane translocase holocomplex"/>
</dbReference>
<dbReference type="DIP" id="DIP-2539N"/>
<dbReference type="FunCoup" id="P35180">
    <property type="interactions" value="392"/>
</dbReference>
<dbReference type="IntAct" id="P35180">
    <property type="interactions" value="18"/>
</dbReference>
<dbReference type="MINT" id="P35180"/>
<dbReference type="STRING" id="4932.YGR082W"/>
<dbReference type="TCDB" id="3.A.8.1.1">
    <property type="family name" value="the mitochondrial protein translocase (mpt) family"/>
</dbReference>
<dbReference type="iPTMnet" id="P35180"/>
<dbReference type="PaxDb" id="4932-YGR082W"/>
<dbReference type="PeptideAtlas" id="P35180"/>
<dbReference type="EnsemblFungi" id="YGR082W_mRNA">
    <property type="protein sequence ID" value="YGR082W"/>
    <property type="gene ID" value="YGR082W"/>
</dbReference>
<dbReference type="GeneID" id="852973"/>
<dbReference type="KEGG" id="sce:YGR082W"/>
<dbReference type="AGR" id="SGD:S000003314"/>
<dbReference type="SGD" id="S000003314">
    <property type="gene designation" value="TOM20"/>
</dbReference>
<dbReference type="VEuPathDB" id="FungiDB:YGR082W"/>
<dbReference type="eggNOG" id="KOG4056">
    <property type="taxonomic scope" value="Eukaryota"/>
</dbReference>
<dbReference type="GeneTree" id="ENSGT00390000011698"/>
<dbReference type="HOGENOM" id="CLU_090411_0_0_1"/>
<dbReference type="InParanoid" id="P35180"/>
<dbReference type="OMA" id="PPPIFQI"/>
<dbReference type="OrthoDB" id="2154253at2759"/>
<dbReference type="BioCyc" id="YEAST:G3O-30794-MONOMER"/>
<dbReference type="Reactome" id="R-SCE-5205685">
    <property type="pathway name" value="PINK1-PRKN Mediated Mitophagy"/>
</dbReference>
<dbReference type="BioGRID-ORCS" id="852973">
    <property type="hits" value="6 hits in 10 CRISPR screens"/>
</dbReference>
<dbReference type="PRO" id="PR:P35180"/>
<dbReference type="Proteomes" id="UP000002311">
    <property type="component" value="Chromosome VII"/>
</dbReference>
<dbReference type="RNAct" id="P35180">
    <property type="molecule type" value="protein"/>
</dbReference>
<dbReference type="GO" id="GO:0005741">
    <property type="term" value="C:mitochondrial outer membrane"/>
    <property type="evidence" value="ECO:0000314"/>
    <property type="project" value="SGD"/>
</dbReference>
<dbReference type="GO" id="GO:0005742">
    <property type="term" value="C:mitochondrial outer membrane translocase complex"/>
    <property type="evidence" value="ECO:0000314"/>
    <property type="project" value="SGD"/>
</dbReference>
<dbReference type="GO" id="GO:0005739">
    <property type="term" value="C:mitochondrion"/>
    <property type="evidence" value="ECO:0007005"/>
    <property type="project" value="SGD"/>
</dbReference>
<dbReference type="GO" id="GO:0030943">
    <property type="term" value="F:mitochondrion targeting sequence binding"/>
    <property type="evidence" value="ECO:0000314"/>
    <property type="project" value="SGD"/>
</dbReference>
<dbReference type="GO" id="GO:0030150">
    <property type="term" value="P:protein import into mitochondrial matrix"/>
    <property type="evidence" value="ECO:0000315"/>
    <property type="project" value="SGD"/>
</dbReference>
<dbReference type="GO" id="GO:0045040">
    <property type="term" value="P:protein insertion into mitochondrial outer membrane"/>
    <property type="evidence" value="ECO:0000314"/>
    <property type="project" value="ComplexPortal"/>
</dbReference>
<dbReference type="GO" id="GO:0016031">
    <property type="term" value="P:tRNA import into mitochondrion"/>
    <property type="evidence" value="ECO:0000315"/>
    <property type="project" value="SGD"/>
</dbReference>
<dbReference type="FunFam" id="1.20.960.10:FF:000002">
    <property type="entry name" value="Mitochondrial import receptor subunit TOM20"/>
    <property type="match status" value="1"/>
</dbReference>
<dbReference type="Gene3D" id="1.20.960.10">
    <property type="entry name" value="Mitochondrial outer membrane translocase complex, subunit Tom20 domain"/>
    <property type="match status" value="1"/>
</dbReference>
<dbReference type="InterPro" id="IPR002056">
    <property type="entry name" value="MAS20"/>
</dbReference>
<dbReference type="InterPro" id="IPR023392">
    <property type="entry name" value="Tom20_dom_sf"/>
</dbReference>
<dbReference type="NCBIfam" id="TIGR00985">
    <property type="entry name" value="3a0801s04tom"/>
    <property type="match status" value="1"/>
</dbReference>
<dbReference type="PANTHER" id="PTHR12430">
    <property type="entry name" value="MITOCHONDRIAL IMPORT RECEPTOR SUBUNIT TOM20"/>
    <property type="match status" value="1"/>
</dbReference>
<dbReference type="PANTHER" id="PTHR12430:SF0">
    <property type="entry name" value="TRANSLOCASE OF OUTER MITOCHONDRIAL MEMBRANE 20"/>
    <property type="match status" value="1"/>
</dbReference>
<dbReference type="Pfam" id="PF02064">
    <property type="entry name" value="MAS20"/>
    <property type="match status" value="1"/>
</dbReference>
<dbReference type="PIRSF" id="PIRSF037707">
    <property type="entry name" value="MAS20_rcpt"/>
    <property type="match status" value="1"/>
</dbReference>
<dbReference type="PRINTS" id="PR00351">
    <property type="entry name" value="OM20RECEPTOR"/>
</dbReference>
<dbReference type="SUPFAM" id="SSF47157">
    <property type="entry name" value="Mitochondrial import receptor subunit Tom20"/>
    <property type="match status" value="1"/>
</dbReference>
<comment type="function">
    <text>Central component of the TOM (translocase of outer membrane) receptor complex responsible for the recognition and translocation of cytosolically synthesized mitochondrial preproteins. Together with TOM22 functions as the transit peptide receptor at the surface of the mitochondrion outer membrane and facilitates the movement of preproteins into the TOM40 translocation pore.</text>
</comment>
<comment type="subunit">
    <text evidence="2 4">Forms part of the preprotein translocase complex of the outer mitochondrial membrane (TOM complex) which consists of at least 7 different proteins (TOM5, TOM6, TOM7, TOM20, TOM22, TOM40 and TOM70). In the complex, interacts with TOM22.</text>
</comment>
<comment type="interaction">
    <interactant intactId="EBI-12522">
        <id>P35180</id>
    </interactant>
    <interactant intactId="EBI-12527">
        <id>P49334</id>
        <label>TOM22</label>
    </interactant>
    <organismsDiffer>false</organismsDiffer>
    <experiments>5</experiments>
</comment>
<comment type="interaction">
    <interactant intactId="EBI-12522">
        <id>P35180</id>
    </interactant>
    <interactant intactId="EBI-12539">
        <id>P23644</id>
        <label>TOM40</label>
    </interactant>
    <organismsDiffer>false</organismsDiffer>
    <experiments>4</experiments>
</comment>
<comment type="subcellular location">
    <subcellularLocation>
        <location evidence="5">Mitochondrion outer membrane</location>
        <topology evidence="5">Single-pass membrane protein</topology>
    </subcellularLocation>
</comment>
<comment type="miscellaneous">
    <text evidence="3">Present with 5680 molecules/cell in log phase SD medium.</text>
</comment>
<comment type="similarity">
    <text evidence="5">Belongs to the Tom20 family.</text>
</comment>
<feature type="chain" id="PRO_0000051550" description="Mitochondrial import receptor subunit TOM20">
    <location>
        <begin position="1"/>
        <end position="183"/>
    </location>
</feature>
<feature type="topological domain" description="Mitochondrial intermembrane" evidence="1">
    <location>
        <begin position="1"/>
        <end position="8"/>
    </location>
</feature>
<feature type="transmembrane region" description="Helical" evidence="1">
    <location>
        <begin position="9"/>
        <end position="28"/>
    </location>
</feature>
<feature type="topological domain" description="Cytoplasmic" evidence="1">
    <location>
        <begin position="29"/>
        <end position="183"/>
    </location>
</feature>
<feature type="modified residue" description="Phosphoserine" evidence="6">
    <location>
        <position position="172"/>
    </location>
</feature>
<gene>
    <name type="primary">TOM20</name>
    <name type="synonym">MAS20</name>
    <name type="synonym">MOM19</name>
    <name type="ordered locus">YGR082W</name>
</gene>
<proteinExistence type="evidence at protein level"/>
<reference key="1">
    <citation type="journal article" date="1993" name="EMBO J.">
        <title>Functional cooperation of mitochondrial protein import receptors in yeast.</title>
        <authorList>
            <person name="Ramage L."/>
            <person name="Junne T."/>
            <person name="Hahne K."/>
            <person name="Lithgow T."/>
            <person name="Schatz G."/>
        </authorList>
    </citation>
    <scope>NUCLEOTIDE SEQUENCE [GENOMIC DNA]</scope>
</reference>
<reference key="2">
    <citation type="journal article" date="1994" name="J. Biol. Chem.">
        <title>Deletion of the receptor MOM19 strongly impairs import of cleavable preproteins into Saccharomyces cerevisiae mitochondria.</title>
        <authorList>
            <person name="Moczko M."/>
            <person name="Ehmann B."/>
            <person name="Gaertner F."/>
            <person name="Hoenlinger A."/>
            <person name="Schaefer E."/>
            <person name="Pfanner N."/>
        </authorList>
    </citation>
    <scope>NUCLEOTIDE SEQUENCE [MRNA]</scope>
</reference>
<reference key="3">
    <citation type="journal article" date="1997" name="Nature">
        <title>The nucleotide sequence of Saccharomyces cerevisiae chromosome VII.</title>
        <authorList>
            <person name="Tettelin H."/>
            <person name="Agostoni-Carbone M.L."/>
            <person name="Albermann K."/>
            <person name="Albers M."/>
            <person name="Arroyo J."/>
            <person name="Backes U."/>
            <person name="Barreiros T."/>
            <person name="Bertani I."/>
            <person name="Bjourson A.J."/>
            <person name="Brueckner M."/>
            <person name="Bruschi C.V."/>
            <person name="Carignani G."/>
            <person name="Castagnoli L."/>
            <person name="Cerdan E."/>
            <person name="Clemente M.L."/>
            <person name="Coblenz A."/>
            <person name="Coglievina M."/>
            <person name="Coissac E."/>
            <person name="Defoor E."/>
            <person name="Del Bino S."/>
            <person name="Delius H."/>
            <person name="Delneri D."/>
            <person name="de Wergifosse P."/>
            <person name="Dujon B."/>
            <person name="Durand P."/>
            <person name="Entian K.-D."/>
            <person name="Eraso P."/>
            <person name="Escribano V."/>
            <person name="Fabiani L."/>
            <person name="Fartmann B."/>
            <person name="Feroli F."/>
            <person name="Feuermann M."/>
            <person name="Frontali L."/>
            <person name="Garcia-Gonzalez M."/>
            <person name="Garcia-Saez M.I."/>
            <person name="Goffeau A."/>
            <person name="Guerreiro P."/>
            <person name="Hani J."/>
            <person name="Hansen M."/>
            <person name="Hebling U."/>
            <person name="Hernandez K."/>
            <person name="Heumann K."/>
            <person name="Hilger F."/>
            <person name="Hofmann B."/>
            <person name="Indge K.J."/>
            <person name="James C.M."/>
            <person name="Klima R."/>
            <person name="Koetter P."/>
            <person name="Kramer B."/>
            <person name="Kramer W."/>
            <person name="Lauquin G."/>
            <person name="Leuther H."/>
            <person name="Louis E.J."/>
            <person name="Maillier E."/>
            <person name="Marconi A."/>
            <person name="Martegani E."/>
            <person name="Mazon M.J."/>
            <person name="Mazzoni C."/>
            <person name="McReynolds A.D.K."/>
            <person name="Melchioretto P."/>
            <person name="Mewes H.-W."/>
            <person name="Minenkova O."/>
            <person name="Mueller-Auer S."/>
            <person name="Nawrocki A."/>
            <person name="Netter P."/>
            <person name="Neu R."/>
            <person name="Nombela C."/>
            <person name="Oliver S.G."/>
            <person name="Panzeri L."/>
            <person name="Paoluzi S."/>
            <person name="Plevani P."/>
            <person name="Portetelle D."/>
            <person name="Portillo F."/>
            <person name="Potier S."/>
            <person name="Purnelle B."/>
            <person name="Rieger M."/>
            <person name="Riles L."/>
            <person name="Rinaldi T."/>
            <person name="Robben J."/>
            <person name="Rodrigues-Pousada C."/>
            <person name="Rodriguez-Belmonte E."/>
            <person name="Rodriguez-Torres A.M."/>
            <person name="Rose M."/>
            <person name="Ruzzi M."/>
            <person name="Saliola M."/>
            <person name="Sanchez-Perez M."/>
            <person name="Schaefer B."/>
            <person name="Schaefer M."/>
            <person name="Scharfe M."/>
            <person name="Schmidheini T."/>
            <person name="Schreer A."/>
            <person name="Skala J."/>
            <person name="Souciet J.-L."/>
            <person name="Steensma H.Y."/>
            <person name="Talla E."/>
            <person name="Thierry A."/>
            <person name="Vandenbol M."/>
            <person name="van der Aart Q.J.M."/>
            <person name="Van Dyck L."/>
            <person name="Vanoni M."/>
            <person name="Verhasselt P."/>
            <person name="Voet M."/>
            <person name="Volckaert G."/>
            <person name="Wambutt R."/>
            <person name="Watson M.D."/>
            <person name="Weber N."/>
            <person name="Wedler E."/>
            <person name="Wedler H."/>
            <person name="Wipfli P."/>
            <person name="Wolf K."/>
            <person name="Wright L.F."/>
            <person name="Zaccaria P."/>
            <person name="Zimmermann M."/>
            <person name="Zollner A."/>
            <person name="Kleine K."/>
        </authorList>
    </citation>
    <scope>NUCLEOTIDE SEQUENCE [LARGE SCALE GENOMIC DNA]</scope>
    <source>
        <strain>ATCC 204508 / S288c</strain>
    </source>
</reference>
<reference key="4">
    <citation type="journal article" date="2014" name="G3 (Bethesda)">
        <title>The reference genome sequence of Saccharomyces cerevisiae: Then and now.</title>
        <authorList>
            <person name="Engel S.R."/>
            <person name="Dietrich F.S."/>
            <person name="Fisk D.G."/>
            <person name="Binkley G."/>
            <person name="Balakrishnan R."/>
            <person name="Costanzo M.C."/>
            <person name="Dwight S.S."/>
            <person name="Hitz B.C."/>
            <person name="Karra K."/>
            <person name="Nash R.S."/>
            <person name="Weng S."/>
            <person name="Wong E.D."/>
            <person name="Lloyd P."/>
            <person name="Skrzypek M.S."/>
            <person name="Miyasato S.R."/>
            <person name="Simison M."/>
            <person name="Cherry J.M."/>
        </authorList>
    </citation>
    <scope>GENOME REANNOTATION</scope>
    <source>
        <strain>ATCC 204508 / S288c</strain>
    </source>
</reference>
<reference key="5">
    <citation type="journal article" date="2007" name="Genome Res.">
        <title>Approaching a complete repository of sequence-verified protein-encoding clones for Saccharomyces cerevisiae.</title>
        <authorList>
            <person name="Hu Y."/>
            <person name="Rolfs A."/>
            <person name="Bhullar B."/>
            <person name="Murthy T.V.S."/>
            <person name="Zhu C."/>
            <person name="Berger M.F."/>
            <person name="Camargo A.A."/>
            <person name="Kelley F."/>
            <person name="McCarron S."/>
            <person name="Jepson D."/>
            <person name="Richardson A."/>
            <person name="Raphael J."/>
            <person name="Moreira D."/>
            <person name="Taycher E."/>
            <person name="Zuo D."/>
            <person name="Mohr S."/>
            <person name="Kane M.F."/>
            <person name="Williamson J."/>
            <person name="Simpson A.J.G."/>
            <person name="Bulyk M.L."/>
            <person name="Harlow E."/>
            <person name="Marsischky G."/>
            <person name="Kolodner R.D."/>
            <person name="LaBaer J."/>
        </authorList>
    </citation>
    <scope>NUCLEOTIDE SEQUENCE [GENOMIC DNA]</scope>
    <source>
        <strain>ATCC 204508 / S288c</strain>
    </source>
</reference>
<reference key="6">
    <citation type="journal article" date="1998" name="Mol. Cell. Biol.">
        <title>Preprotein translocase of the outer mitochondrial membrane: molecular dissection and assembly of the general import pore complex.</title>
        <authorList>
            <person name="Dekker P.J.T."/>
            <person name="Ryan M.T."/>
            <person name="Brix J."/>
            <person name="Mueller H."/>
            <person name="Hoenlinger A."/>
            <person name="Pfanner N."/>
        </authorList>
    </citation>
    <scope>IDENTIFICATION IN THE TOM COMPLEX</scope>
</reference>
<reference key="7">
    <citation type="journal article" date="1999" name="Nature">
        <title>Tom22 is a multifunctional organizer of the mitochondrial preprotein translocase.</title>
        <authorList>
            <person name="van Wilpe S."/>
            <person name="Ryan M.T."/>
            <person name="Hill K."/>
            <person name="Maarse A.C."/>
            <person name="Meisinger C."/>
            <person name="Brix J."/>
            <person name="Dekker P.J.T."/>
            <person name="Moczko M."/>
            <person name="Wagner R."/>
            <person name="Meijer M."/>
            <person name="Guiard B."/>
            <person name="Hoenlinger A."/>
            <person name="Pfanner N."/>
        </authorList>
    </citation>
    <scope>INTERACTION WITH TOM22</scope>
</reference>
<reference key="8">
    <citation type="journal article" date="2003" name="Nature">
        <title>Global analysis of protein expression in yeast.</title>
        <authorList>
            <person name="Ghaemmaghami S."/>
            <person name="Huh W.-K."/>
            <person name="Bower K."/>
            <person name="Howson R.W."/>
            <person name="Belle A."/>
            <person name="Dephoure N."/>
            <person name="O'Shea E.K."/>
            <person name="Weissman J.S."/>
        </authorList>
    </citation>
    <scope>LEVEL OF PROTEIN EXPRESSION [LARGE SCALE ANALYSIS]</scope>
</reference>
<reference key="9">
    <citation type="journal article" date="2008" name="Mol. Cell. Proteomics">
        <title>A multidimensional chromatography technology for in-depth phosphoproteome analysis.</title>
        <authorList>
            <person name="Albuquerque C.P."/>
            <person name="Smolka M.B."/>
            <person name="Payne S.H."/>
            <person name="Bafna V."/>
            <person name="Eng J."/>
            <person name="Zhou H."/>
        </authorList>
    </citation>
    <scope>PHOSPHORYLATION [LARGE SCALE ANALYSIS] AT SER-172</scope>
    <scope>IDENTIFICATION BY MASS SPECTROMETRY [LARGE SCALE ANALYSIS]</scope>
</reference>
<sequence>MSQSNPILRGLAITTAIAALSATGYAIYFDYQRRNSPQFRKVLRQRAKEQAKMEEQAKTHAKEVKLQKVTEFLSMELAKDPIPSDPSEREATFTTNVENGERLSMQQGKELEAASKFYKALTVYPQPADLLGIYQRSIPEAIYEYIILMIAILPPANVASFVKGVVGSKAESDAVAEANDIDD</sequence>
<keyword id="KW-0472">Membrane</keyword>
<keyword id="KW-0496">Mitochondrion</keyword>
<keyword id="KW-1000">Mitochondrion outer membrane</keyword>
<keyword id="KW-0597">Phosphoprotein</keyword>
<keyword id="KW-0653">Protein transport</keyword>
<keyword id="KW-1185">Reference proteome</keyword>
<keyword id="KW-0812">Transmembrane</keyword>
<keyword id="KW-1133">Transmembrane helix</keyword>
<keyword id="KW-0813">Transport</keyword>
<accession>P35180</accession>
<accession>D6VUL4</accession>
<protein>
    <recommendedName>
        <fullName>Mitochondrial import receptor subunit TOM20</fullName>
    </recommendedName>
    <alternativeName>
        <fullName>Mitochondrial 20 kDa outer membrane protein</fullName>
    </alternativeName>
    <alternativeName>
        <fullName>Protein MAS20</fullName>
    </alternativeName>
    <alternativeName>
        <fullName>Translocase of outer membrane 20 kDa subunit</fullName>
    </alternativeName>
</protein>
<name>TOM20_YEAST</name>